<keyword id="KW-0235">DNA replication</keyword>
<dbReference type="EMBL" id="CU928163">
    <property type="protein sequence ID" value="CAR14783.1"/>
    <property type="molecule type" value="Genomic_DNA"/>
</dbReference>
<dbReference type="RefSeq" id="WP_001158035.1">
    <property type="nucleotide sequence ID" value="NC_011751.1"/>
</dbReference>
<dbReference type="RefSeq" id="YP_002414288.1">
    <property type="nucleotide sequence ID" value="NC_011751.1"/>
</dbReference>
<dbReference type="SMR" id="B7NDD3"/>
<dbReference type="STRING" id="585056.ECUMN_3629"/>
<dbReference type="GeneID" id="75206004"/>
<dbReference type="KEGG" id="eum:ECUMN_3629"/>
<dbReference type="PATRIC" id="fig|585056.7.peg.3809"/>
<dbReference type="HOGENOM" id="CLU_080999_3_1_6"/>
<dbReference type="Proteomes" id="UP000007097">
    <property type="component" value="Chromosome"/>
</dbReference>
<dbReference type="GO" id="GO:0097367">
    <property type="term" value="F:carbohydrate derivative binding"/>
    <property type="evidence" value="ECO:0007669"/>
    <property type="project" value="InterPro"/>
</dbReference>
<dbReference type="GO" id="GO:1901135">
    <property type="term" value="P:carbohydrate derivative metabolic process"/>
    <property type="evidence" value="ECO:0007669"/>
    <property type="project" value="InterPro"/>
</dbReference>
<dbReference type="GO" id="GO:0006260">
    <property type="term" value="P:DNA replication"/>
    <property type="evidence" value="ECO:0007669"/>
    <property type="project" value="UniProtKB-UniRule"/>
</dbReference>
<dbReference type="CDD" id="cd05006">
    <property type="entry name" value="SIS_GmhA"/>
    <property type="match status" value="1"/>
</dbReference>
<dbReference type="FunFam" id="3.40.50.10490:FF:000006">
    <property type="entry name" value="DnaA initiator-associating protein DiaA"/>
    <property type="match status" value="1"/>
</dbReference>
<dbReference type="Gene3D" id="3.40.50.10490">
    <property type="entry name" value="Glucose-6-phosphate isomerase like protein, domain 1"/>
    <property type="match status" value="1"/>
</dbReference>
<dbReference type="HAMAP" id="MF_01157">
    <property type="entry name" value="SIS_DiaA"/>
    <property type="match status" value="1"/>
</dbReference>
<dbReference type="InterPro" id="IPR023070">
    <property type="entry name" value="DiaA"/>
</dbReference>
<dbReference type="InterPro" id="IPR035461">
    <property type="entry name" value="GmhA/DiaA"/>
</dbReference>
<dbReference type="InterPro" id="IPR001347">
    <property type="entry name" value="SIS_dom"/>
</dbReference>
<dbReference type="InterPro" id="IPR046348">
    <property type="entry name" value="SIS_dom_sf"/>
</dbReference>
<dbReference type="InterPro" id="IPR050099">
    <property type="entry name" value="SIS_GmhA/DiaA_subfam"/>
</dbReference>
<dbReference type="NCBIfam" id="NF008138">
    <property type="entry name" value="PRK10886.1"/>
    <property type="match status" value="1"/>
</dbReference>
<dbReference type="NCBIfam" id="NF010546">
    <property type="entry name" value="PRK13936.1"/>
    <property type="match status" value="1"/>
</dbReference>
<dbReference type="PANTHER" id="PTHR30390:SF6">
    <property type="entry name" value="DNAA INITIATOR-ASSOCIATING PROTEIN DIAA"/>
    <property type="match status" value="1"/>
</dbReference>
<dbReference type="PANTHER" id="PTHR30390">
    <property type="entry name" value="SEDOHEPTULOSE 7-PHOSPHATE ISOMERASE / DNAA INITIATOR-ASSOCIATING FACTOR FOR REPLICATION INITIATION"/>
    <property type="match status" value="1"/>
</dbReference>
<dbReference type="Pfam" id="PF13580">
    <property type="entry name" value="SIS_2"/>
    <property type="match status" value="1"/>
</dbReference>
<dbReference type="SUPFAM" id="SSF53697">
    <property type="entry name" value="SIS domain"/>
    <property type="match status" value="1"/>
</dbReference>
<dbReference type="PROSITE" id="PS51464">
    <property type="entry name" value="SIS"/>
    <property type="match status" value="1"/>
</dbReference>
<comment type="function">
    <text evidence="1">Required for the timely initiation of chromosomal replication via direct interactions with the DnaA initiator protein.</text>
</comment>
<comment type="subunit">
    <text evidence="1">Homotetramer; dimer of dimers.</text>
</comment>
<comment type="similarity">
    <text evidence="1">Belongs to the SIS family. DiaA subfamily.</text>
</comment>
<sequence length="196" mass="21090">MQERIKACFTESIQTQIAAAEALPDAISRAAMTLVQSLLNGNKILCCGNGTSAANAQHFAASMINRFETERPSLPAIALNTDNVVLTAIANDRLHDEVYAKQVRALGHAGDVLLAISTRGNSRDIVKAVEAAVTRDMTIVALTGYDGGELAGLLGPQDVEIRIPSHRSARIQEMHMLTVNCLCDLIDNTLFPHQDV</sequence>
<protein>
    <recommendedName>
        <fullName evidence="1">DnaA initiator-associating protein DiaA</fullName>
    </recommendedName>
</protein>
<gene>
    <name evidence="1" type="primary">diaA</name>
    <name type="ordered locus">ECUMN_3629</name>
</gene>
<reference key="1">
    <citation type="journal article" date="2009" name="PLoS Genet.">
        <title>Organised genome dynamics in the Escherichia coli species results in highly diverse adaptive paths.</title>
        <authorList>
            <person name="Touchon M."/>
            <person name="Hoede C."/>
            <person name="Tenaillon O."/>
            <person name="Barbe V."/>
            <person name="Baeriswyl S."/>
            <person name="Bidet P."/>
            <person name="Bingen E."/>
            <person name="Bonacorsi S."/>
            <person name="Bouchier C."/>
            <person name="Bouvet O."/>
            <person name="Calteau A."/>
            <person name="Chiapello H."/>
            <person name="Clermont O."/>
            <person name="Cruveiller S."/>
            <person name="Danchin A."/>
            <person name="Diard M."/>
            <person name="Dossat C."/>
            <person name="Karoui M.E."/>
            <person name="Frapy E."/>
            <person name="Garry L."/>
            <person name="Ghigo J.M."/>
            <person name="Gilles A.M."/>
            <person name="Johnson J."/>
            <person name="Le Bouguenec C."/>
            <person name="Lescat M."/>
            <person name="Mangenot S."/>
            <person name="Martinez-Jehanne V."/>
            <person name="Matic I."/>
            <person name="Nassif X."/>
            <person name="Oztas S."/>
            <person name="Petit M.A."/>
            <person name="Pichon C."/>
            <person name="Rouy Z."/>
            <person name="Ruf C.S."/>
            <person name="Schneider D."/>
            <person name="Tourret J."/>
            <person name="Vacherie B."/>
            <person name="Vallenet D."/>
            <person name="Medigue C."/>
            <person name="Rocha E.P.C."/>
            <person name="Denamur E."/>
        </authorList>
    </citation>
    <scope>NUCLEOTIDE SEQUENCE [LARGE SCALE GENOMIC DNA]</scope>
    <source>
        <strain>UMN026 / ExPEC</strain>
    </source>
</reference>
<name>DIAA_ECOLU</name>
<evidence type="ECO:0000255" key="1">
    <source>
        <dbReference type="HAMAP-Rule" id="MF_01157"/>
    </source>
</evidence>
<feature type="chain" id="PRO_1000137789" description="DnaA initiator-associating protein DiaA">
    <location>
        <begin position="1"/>
        <end position="196"/>
    </location>
</feature>
<feature type="domain" description="SIS" evidence="1">
    <location>
        <begin position="34"/>
        <end position="196"/>
    </location>
</feature>
<organism>
    <name type="scientific">Escherichia coli O17:K52:H18 (strain UMN026 / ExPEC)</name>
    <dbReference type="NCBI Taxonomy" id="585056"/>
    <lineage>
        <taxon>Bacteria</taxon>
        <taxon>Pseudomonadati</taxon>
        <taxon>Pseudomonadota</taxon>
        <taxon>Gammaproteobacteria</taxon>
        <taxon>Enterobacterales</taxon>
        <taxon>Enterobacteriaceae</taxon>
        <taxon>Escherichia</taxon>
    </lineage>
</organism>
<accession>B7NDD3</accession>
<proteinExistence type="inferred from homology"/>